<accession>Q8VHH8</accession>
<gene>
    <name type="primary">Il25</name>
    <name type="synonym">Il17e</name>
</gene>
<proteinExistence type="evidence at transcript level"/>
<organism>
    <name type="scientific">Mus musculus</name>
    <name type="common">Mouse</name>
    <dbReference type="NCBI Taxonomy" id="10090"/>
    <lineage>
        <taxon>Eukaryota</taxon>
        <taxon>Metazoa</taxon>
        <taxon>Chordata</taxon>
        <taxon>Craniata</taxon>
        <taxon>Vertebrata</taxon>
        <taxon>Euteleostomi</taxon>
        <taxon>Mammalia</taxon>
        <taxon>Eutheria</taxon>
        <taxon>Euarchontoglires</taxon>
        <taxon>Glires</taxon>
        <taxon>Rodentia</taxon>
        <taxon>Myomorpha</taxon>
        <taxon>Muroidea</taxon>
        <taxon>Muridae</taxon>
        <taxon>Murinae</taxon>
        <taxon>Mus</taxon>
        <taxon>Mus</taxon>
    </lineage>
</organism>
<name>IL25_MOUSE</name>
<keyword id="KW-0202">Cytokine</keyword>
<keyword id="KW-1015">Disulfide bond</keyword>
<keyword id="KW-0325">Glycoprotein</keyword>
<keyword id="KW-1185">Reference proteome</keyword>
<keyword id="KW-0964">Secreted</keyword>
<keyword id="KW-0732">Signal</keyword>
<evidence type="ECO:0000250" key="1">
    <source>
        <dbReference type="UniProtKB" id="Q9H293"/>
    </source>
</evidence>
<evidence type="ECO:0000255" key="2"/>
<evidence type="ECO:0000256" key="3">
    <source>
        <dbReference type="SAM" id="MobiDB-lite"/>
    </source>
</evidence>
<evidence type="ECO:0000269" key="4">
    <source>
    </source>
</evidence>
<evidence type="ECO:0000269" key="5">
    <source>
    </source>
</evidence>
<evidence type="ECO:0000305" key="6"/>
<reference key="1">
    <citation type="journal article" date="2001" name="Immunity">
        <title>IL-25 induces IL-4, IL-5, and IL-13 and Th2-associated pathologies in vivo.</title>
        <authorList>
            <person name="Fort M.M."/>
            <person name="Cheung J."/>
            <person name="Yen D."/>
            <person name="Li J."/>
            <person name="Zurawski S.M."/>
            <person name="Lo S."/>
            <person name="Menon S."/>
            <person name="Clifford T."/>
            <person name="Hunte B."/>
            <person name="Lesley R."/>
            <person name="Muchamuel T."/>
            <person name="Hurst S.D."/>
            <person name="Zurawski G."/>
            <person name="Leach M.W."/>
            <person name="Gorman D.M."/>
            <person name="Rennick D.M."/>
        </authorList>
    </citation>
    <scope>NUCLEOTIDE SEQUENCE [MRNA]</scope>
    <scope>FUNCTION</scope>
    <source>
        <strain>C57BL/6J</strain>
    </source>
</reference>
<reference key="2">
    <citation type="submission" date="2001-12" db="EMBL/GenBank/DDBJ databases">
        <title>New IL-17 family members promote Th1 or Th2 responses in the lung: In vivo function of the novel cytokine IL-25.</title>
        <authorList>
            <person name="Hurst S.D."/>
            <person name="Muchamuel T."/>
            <person name="Gorman D.M."/>
            <person name="Gilbert J.M."/>
            <person name="Clifford T."/>
            <person name="Kwan S."/>
            <person name="Menon S."/>
            <person name="Seymour B."/>
            <person name="Jackson C."/>
            <person name="Kung T."/>
            <person name="Brieland J."/>
            <person name="Zurawski S.M."/>
            <person name="Chapman R."/>
            <person name="Zurawski G."/>
            <person name="Coffman R.L."/>
        </authorList>
    </citation>
    <scope>NUCLEOTIDE SEQUENCE [MRNA]</scope>
    <source>
        <strain>C57BL/6J</strain>
    </source>
</reference>
<reference key="3">
    <citation type="journal article" date="2004" name="Genome Res.">
        <title>The status, quality, and expansion of the NIH full-length cDNA project: the Mammalian Gene Collection (MGC).</title>
        <authorList>
            <consortium name="The MGC Project Team"/>
        </authorList>
    </citation>
    <scope>NUCLEOTIDE SEQUENCE [LARGE SCALE MRNA]</scope>
    <source>
        <tissue>Brain</tissue>
    </source>
</reference>
<reference key="4">
    <citation type="journal article" date="2009" name="PLoS Biol.">
        <title>Lineage-specific biology revealed by a finished genome assembly of the mouse.</title>
        <authorList>
            <person name="Church D.M."/>
            <person name="Goodstadt L."/>
            <person name="Hillier L.W."/>
            <person name="Zody M.C."/>
            <person name="Goldstein S."/>
            <person name="She X."/>
            <person name="Bult C.J."/>
            <person name="Agarwala R."/>
            <person name="Cherry J.L."/>
            <person name="DiCuccio M."/>
            <person name="Hlavina W."/>
            <person name="Kapustin Y."/>
            <person name="Meric P."/>
            <person name="Maglott D."/>
            <person name="Birtle Z."/>
            <person name="Marques A.C."/>
            <person name="Graves T."/>
            <person name="Zhou S."/>
            <person name="Teague B."/>
            <person name="Potamousis K."/>
            <person name="Churas C."/>
            <person name="Place M."/>
            <person name="Herschleb J."/>
            <person name="Runnheim R."/>
            <person name="Forrest D."/>
            <person name="Amos-Landgraf J."/>
            <person name="Schwartz D.C."/>
            <person name="Cheng Z."/>
            <person name="Lindblad-Toh K."/>
            <person name="Eichler E.E."/>
            <person name="Ponting C.P."/>
        </authorList>
    </citation>
    <scope>NUCLEOTIDE SEQUENCE [LARGE SCALE GENOMIC DNA]</scope>
    <source>
        <strain>C57BL/6J</strain>
    </source>
</reference>
<reference key="5">
    <citation type="journal article" date="2008" name="J. Immunol.">
        <title>Identification of functional roles for both IL-17RB and IL-17RA in mediating IL-25-induced activities.</title>
        <authorList>
            <person name="Rickel E.A."/>
            <person name="Siegel L.A."/>
            <person name="Yoon B.R."/>
            <person name="Rottman J.B."/>
            <person name="Kugler D.G."/>
            <person name="Swart D.A."/>
            <person name="Anders P.M."/>
            <person name="Tocker J.E."/>
            <person name="Comeau M.R."/>
            <person name="Budelsky A.L."/>
        </authorList>
    </citation>
    <scope>FUNCTION</scope>
</reference>
<reference key="6">
    <citation type="journal article" date="2022" name="Front. Immunol.">
        <title>Role of IL-25 on Eosinophils in the Initiation of Th2 Responses in Allergic Asthma.</title>
        <authorList>
            <person name="Peng B."/>
            <person name="Sun L."/>
            <person name="Zhang M."/>
            <person name="Yan H."/>
            <person name="Shi G."/>
            <person name="Xia Z."/>
            <person name="Dai R."/>
            <person name="Tang W."/>
        </authorList>
    </citation>
    <scope>FUNCTION</scope>
    <scope>DISRUPTION PHENOTYPE</scope>
</reference>
<sequence length="169" mass="19210">MYQAVAFLAMIVGTHTVSLRIQEGCSHLPSCCPSKEQEPPEEWLKWSSASVSPPEPLSHTHHAESCRASKDGPLNSRAISPWSYELDRDLNRVPQDLYHARCLCPHCVSLQTGSHMDPLGNSVPLYHNQTVFYRRPCHGEEGTHRRYCLERRLYRVSLACVCVRPRVMA</sequence>
<comment type="function">
    <text evidence="1 4 5">Cytokine produced by various cells such as eosinophils, T-helper type 2 (Th2) cells or epithelial cells that plays a role in internal safety of adaptive immune responses by regulating cytokine production (PubMed:11754819, PubMed:35615348). Promotes and augments T-helper type 2 responses locally or systemically (PubMed:35615348). Exerts its activity via its receptor composed of IL17RA and IL17RB for signal transduction (PubMed:18768888). In turn, stimulates the JAK2-STAT5A pathway and promotes the secretion of type-2 associated cytokines including IL4, IL9 and IL13. Also induces the release of IL8, and IL6 from eosinophils through the combined activation of MAPK and NF-kappa-B pathways. Inhibits the differentiation of T-helper (Th17) cells via the production of IL4, IL5 and IL13.</text>
</comment>
<comment type="subcellular location">
    <subcellularLocation>
        <location evidence="1">Secreted</location>
    </subcellularLocation>
</comment>
<comment type="disruption phenotype">
    <text evidence="5">Mice display mitigated inflammatory responses and Th2 responses in house dust mite/HDM-induced asthma model.</text>
</comment>
<comment type="similarity">
    <text evidence="6">Belongs to the IL-17 family.</text>
</comment>
<dbReference type="EMBL" id="BC120568">
    <property type="protein sequence ID" value="AAI20569.1"/>
    <property type="molecule type" value="mRNA"/>
</dbReference>
<dbReference type="EMBL" id="BC125524">
    <property type="protein sequence ID" value="AAI25525.1"/>
    <property type="molecule type" value="mRNA"/>
</dbReference>
<dbReference type="EMBL" id="BC144962">
    <property type="protein sequence ID" value="AAI44963.1"/>
    <property type="molecule type" value="mRNA"/>
</dbReference>
<dbReference type="EMBL" id="AF458060">
    <property type="protein sequence ID" value="AAL57623.1"/>
    <property type="molecule type" value="mRNA"/>
</dbReference>
<dbReference type="CCDS" id="CCDS36926.1"/>
<dbReference type="RefSeq" id="NP_542767.1">
    <property type="nucleotide sequence ID" value="NM_080729.3"/>
</dbReference>
<dbReference type="FunCoup" id="Q8VHH8">
    <property type="interactions" value="589"/>
</dbReference>
<dbReference type="IntAct" id="Q8VHH8">
    <property type="interactions" value="1"/>
</dbReference>
<dbReference type="STRING" id="10090.ENSMUSP00000039641"/>
<dbReference type="GlyGen" id="Q8VHH8">
    <property type="glycosylation" value="1 site"/>
</dbReference>
<dbReference type="PhosphoSitePlus" id="Q8VHH8"/>
<dbReference type="PaxDb" id="10090-ENSMUSP00000039641"/>
<dbReference type="Antibodypedia" id="22458">
    <property type="antibodies" value="728 antibodies from 38 providers"/>
</dbReference>
<dbReference type="DNASU" id="140806"/>
<dbReference type="Ensembl" id="ENSMUST00000037863.6">
    <property type="protein sequence ID" value="ENSMUSP00000039641.6"/>
    <property type="gene ID" value="ENSMUSG00000040770.6"/>
</dbReference>
<dbReference type="GeneID" id="140806"/>
<dbReference type="KEGG" id="mmu:140806"/>
<dbReference type="UCSC" id="uc007txn.2">
    <property type="organism name" value="mouse"/>
</dbReference>
<dbReference type="AGR" id="MGI:2155888"/>
<dbReference type="CTD" id="64806"/>
<dbReference type="MGI" id="MGI:2155888">
    <property type="gene designation" value="Il25"/>
</dbReference>
<dbReference type="VEuPathDB" id="HostDB:ENSMUSG00000040770"/>
<dbReference type="eggNOG" id="ENOG502S755">
    <property type="taxonomic scope" value="Eukaryota"/>
</dbReference>
<dbReference type="GeneTree" id="ENSGT00930000151068"/>
<dbReference type="HOGENOM" id="CLU_139236_0_0_1"/>
<dbReference type="InParanoid" id="Q8VHH8"/>
<dbReference type="OMA" id="TEEWLKW"/>
<dbReference type="OrthoDB" id="6038945at2759"/>
<dbReference type="TreeFam" id="TF314701"/>
<dbReference type="BioGRID-ORCS" id="140806">
    <property type="hits" value="1 hit in 77 CRISPR screens"/>
</dbReference>
<dbReference type="ChiTaRS" id="Mydgf">
    <property type="organism name" value="mouse"/>
</dbReference>
<dbReference type="PRO" id="PR:Q8VHH8"/>
<dbReference type="Proteomes" id="UP000000589">
    <property type="component" value="Chromosome 14"/>
</dbReference>
<dbReference type="RNAct" id="Q8VHH8">
    <property type="molecule type" value="protein"/>
</dbReference>
<dbReference type="Bgee" id="ENSMUSG00000040770">
    <property type="expression patterns" value="Expressed in epiblast cell in embryo and 13 other cell types or tissues"/>
</dbReference>
<dbReference type="GO" id="GO:0005615">
    <property type="term" value="C:extracellular space"/>
    <property type="evidence" value="ECO:0007669"/>
    <property type="project" value="UniProtKB-KW"/>
</dbReference>
<dbReference type="GO" id="GO:0005125">
    <property type="term" value="F:cytokine activity"/>
    <property type="evidence" value="ECO:0000314"/>
    <property type="project" value="MGI"/>
</dbReference>
<dbReference type="GO" id="GO:0030380">
    <property type="term" value="F:interleukin-17E receptor binding"/>
    <property type="evidence" value="ECO:0000266"/>
    <property type="project" value="MGI"/>
</dbReference>
<dbReference type="GO" id="GO:0030222">
    <property type="term" value="P:eosinophil differentiation"/>
    <property type="evidence" value="ECO:0000314"/>
    <property type="project" value="MGI"/>
</dbReference>
<dbReference type="GO" id="GO:0006954">
    <property type="term" value="P:inflammatory response"/>
    <property type="evidence" value="ECO:0000314"/>
    <property type="project" value="MGI"/>
</dbReference>
<dbReference type="GO" id="GO:0002437">
    <property type="term" value="P:inflammatory response to antigenic stimulus"/>
    <property type="evidence" value="ECO:0007669"/>
    <property type="project" value="Ensembl"/>
</dbReference>
<dbReference type="GO" id="GO:0045944">
    <property type="term" value="P:positive regulation of transcription by RNA polymerase II"/>
    <property type="evidence" value="ECO:0000314"/>
    <property type="project" value="MGI"/>
</dbReference>
<dbReference type="GO" id="GO:0009620">
    <property type="term" value="P:response to fungus"/>
    <property type="evidence" value="ECO:0000314"/>
    <property type="project" value="MGI"/>
</dbReference>
<dbReference type="GO" id="GO:0009624">
    <property type="term" value="P:response to nematode"/>
    <property type="evidence" value="ECO:0000314"/>
    <property type="project" value="MGI"/>
</dbReference>
<dbReference type="FunFam" id="2.10.90.10:FF:000057">
    <property type="entry name" value="Interleukin 17E"/>
    <property type="match status" value="1"/>
</dbReference>
<dbReference type="Gene3D" id="2.10.90.10">
    <property type="entry name" value="Cystine-knot cytokines"/>
    <property type="match status" value="1"/>
</dbReference>
<dbReference type="InterPro" id="IPR029034">
    <property type="entry name" value="Cystine-knot_cytokine"/>
</dbReference>
<dbReference type="InterPro" id="IPR010345">
    <property type="entry name" value="IL-17_fam"/>
</dbReference>
<dbReference type="Pfam" id="PF06083">
    <property type="entry name" value="IL17"/>
    <property type="match status" value="1"/>
</dbReference>
<dbReference type="SUPFAM" id="SSF57501">
    <property type="entry name" value="Cystine-knot cytokines"/>
    <property type="match status" value="1"/>
</dbReference>
<feature type="signal peptide" evidence="2">
    <location>
        <begin position="1"/>
        <end position="16"/>
    </location>
</feature>
<feature type="chain" id="PRO_5015099440" description="Interleukin-25" evidence="2">
    <location>
        <begin position="17"/>
        <end position="169"/>
    </location>
</feature>
<feature type="region of interest" description="Disordered" evidence="3">
    <location>
        <begin position="47"/>
        <end position="70"/>
    </location>
</feature>
<feature type="compositionally biased region" description="Basic and acidic residues" evidence="3">
    <location>
        <begin position="61"/>
        <end position="70"/>
    </location>
</feature>
<feature type="glycosylation site" description="N-linked (GlcNAc...) asparagine" evidence="2">
    <location>
        <position position="128"/>
    </location>
</feature>
<feature type="disulfide bond" evidence="1">
    <location>
        <begin position="102"/>
        <end position="160"/>
    </location>
</feature>
<feature type="disulfide bond" evidence="1">
    <location>
        <begin position="107"/>
        <end position="162"/>
    </location>
</feature>
<protein>
    <recommendedName>
        <fullName>Interleukin-25</fullName>
        <shortName>IL-25</shortName>
    </recommendedName>
    <alternativeName>
        <fullName>Interleukin-17E</fullName>
        <shortName>IL-17E</shortName>
    </alternativeName>
</protein>